<organism>
    <name type="scientific">Drosophila punjabiensis</name>
    <name type="common">Fruit fly</name>
    <dbReference type="NCBI Taxonomy" id="60717"/>
    <lineage>
        <taxon>Eukaryota</taxon>
        <taxon>Metazoa</taxon>
        <taxon>Ecdysozoa</taxon>
        <taxon>Arthropoda</taxon>
        <taxon>Hexapoda</taxon>
        <taxon>Insecta</taxon>
        <taxon>Pterygota</taxon>
        <taxon>Neoptera</taxon>
        <taxon>Endopterygota</taxon>
        <taxon>Diptera</taxon>
        <taxon>Brachycera</taxon>
        <taxon>Muscomorpha</taxon>
        <taxon>Ephydroidea</taxon>
        <taxon>Drosophilidae</taxon>
        <taxon>Drosophila</taxon>
        <taxon>Sophophora</taxon>
    </lineage>
</organism>
<name>AMYR_DROPN</name>
<evidence type="ECO:0000250" key="1"/>
<evidence type="ECO:0000250" key="2">
    <source>
        <dbReference type="UniProtKB" id="P04746"/>
    </source>
</evidence>
<evidence type="ECO:0000250" key="3">
    <source>
        <dbReference type="UniProtKB" id="P56634"/>
    </source>
</evidence>
<evidence type="ECO:0000255" key="4"/>
<evidence type="ECO:0000305" key="5"/>
<keyword id="KW-0106">Calcium</keyword>
<keyword id="KW-0119">Carbohydrate metabolism</keyword>
<keyword id="KW-0868">Chloride</keyword>
<keyword id="KW-1015">Disulfide bond</keyword>
<keyword id="KW-0326">Glycosidase</keyword>
<keyword id="KW-0378">Hydrolase</keyword>
<keyword id="KW-0479">Metal-binding</keyword>
<keyword id="KW-0873">Pyrrolidone carboxylic acid</keyword>
<keyword id="KW-0964">Secreted</keyword>
<keyword id="KW-0732">Signal</keyword>
<reference key="1">
    <citation type="submission" date="1997-04" db="EMBL/GenBank/DDBJ databases">
        <authorList>
            <person name="Da Lage J.-L."/>
        </authorList>
    </citation>
    <scope>NUCLEOTIDE SEQUENCE [GENOMIC DNA]</scope>
</reference>
<protein>
    <recommendedName>
        <fullName>Alpha-amylase-related protein</fullName>
        <ecNumber evidence="2">3.2.1.1</ecNumber>
    </recommendedName>
</protein>
<comment type="catalytic activity">
    <reaction evidence="2">
        <text>Endohydrolysis of (1-&gt;4)-alpha-D-glucosidic linkages in polysaccharides containing three or more (1-&gt;4)-alpha-linked D-glucose units.</text>
        <dbReference type="EC" id="3.2.1.1"/>
    </reaction>
</comment>
<comment type="cofactor">
    <cofactor evidence="3">
        <name>Ca(2+)</name>
        <dbReference type="ChEBI" id="CHEBI:29108"/>
    </cofactor>
    <text evidence="3">Binds 1 Ca(2+) ion per subunit.</text>
</comment>
<comment type="cofactor">
    <cofactor evidence="3">
        <name>chloride</name>
        <dbReference type="ChEBI" id="CHEBI:17996"/>
    </cofactor>
    <text evidence="3">Binds 1 Cl(-) ion per subunit.</text>
</comment>
<comment type="subunit">
    <text evidence="1">Monomer.</text>
</comment>
<comment type="subcellular location">
    <subcellularLocation>
        <location evidence="5">Secreted</location>
    </subcellularLocation>
</comment>
<comment type="similarity">
    <text evidence="5">Belongs to the glycosyl hydrolase 13 family.</text>
</comment>
<dbReference type="EC" id="3.2.1.1" evidence="2"/>
<dbReference type="EMBL" id="U96165">
    <property type="protein sequence ID" value="AAC39115.1"/>
    <property type="molecule type" value="Genomic_DNA"/>
</dbReference>
<dbReference type="SMR" id="O77022"/>
<dbReference type="CAZy" id="GH13">
    <property type="family name" value="Glycoside Hydrolase Family 13"/>
</dbReference>
<dbReference type="GO" id="GO:0005576">
    <property type="term" value="C:extracellular region"/>
    <property type="evidence" value="ECO:0007669"/>
    <property type="project" value="UniProtKB-SubCell"/>
</dbReference>
<dbReference type="GO" id="GO:0004556">
    <property type="term" value="F:alpha-amylase activity"/>
    <property type="evidence" value="ECO:0007669"/>
    <property type="project" value="UniProtKB-EC"/>
</dbReference>
<dbReference type="GO" id="GO:0046872">
    <property type="term" value="F:metal ion binding"/>
    <property type="evidence" value="ECO:0007669"/>
    <property type="project" value="UniProtKB-KW"/>
</dbReference>
<dbReference type="GO" id="GO:0005975">
    <property type="term" value="P:carbohydrate metabolic process"/>
    <property type="evidence" value="ECO:0007669"/>
    <property type="project" value="InterPro"/>
</dbReference>
<dbReference type="CDD" id="cd11317">
    <property type="entry name" value="AmyAc_bac_euk_AmyA"/>
    <property type="match status" value="1"/>
</dbReference>
<dbReference type="FunFam" id="3.20.20.80:FF:000119">
    <property type="entry name" value="Alpha-amylase-related protein"/>
    <property type="match status" value="1"/>
</dbReference>
<dbReference type="FunFam" id="2.60.40.1180:FF:000020">
    <property type="entry name" value="Pancreatic alpha-amylase"/>
    <property type="match status" value="1"/>
</dbReference>
<dbReference type="Gene3D" id="3.20.20.80">
    <property type="entry name" value="Glycosidases"/>
    <property type="match status" value="1"/>
</dbReference>
<dbReference type="Gene3D" id="2.60.40.1180">
    <property type="entry name" value="Golgi alpha-mannosidase II"/>
    <property type="match status" value="1"/>
</dbReference>
<dbReference type="InterPro" id="IPR006048">
    <property type="entry name" value="A-amylase/branching_C"/>
</dbReference>
<dbReference type="InterPro" id="IPR031319">
    <property type="entry name" value="A-amylase_C"/>
</dbReference>
<dbReference type="InterPro" id="IPR006046">
    <property type="entry name" value="Alpha_amylase"/>
</dbReference>
<dbReference type="InterPro" id="IPR006047">
    <property type="entry name" value="Glyco_hydro_13_cat_dom"/>
</dbReference>
<dbReference type="InterPro" id="IPR013780">
    <property type="entry name" value="Glyco_hydro_b"/>
</dbReference>
<dbReference type="InterPro" id="IPR017853">
    <property type="entry name" value="Glycoside_hydrolase_SF"/>
</dbReference>
<dbReference type="PANTHER" id="PTHR43447">
    <property type="entry name" value="ALPHA-AMYLASE"/>
    <property type="match status" value="1"/>
</dbReference>
<dbReference type="Pfam" id="PF00128">
    <property type="entry name" value="Alpha-amylase"/>
    <property type="match status" value="1"/>
</dbReference>
<dbReference type="Pfam" id="PF02806">
    <property type="entry name" value="Alpha-amylase_C"/>
    <property type="match status" value="1"/>
</dbReference>
<dbReference type="PRINTS" id="PR00110">
    <property type="entry name" value="ALPHAAMYLASE"/>
</dbReference>
<dbReference type="SMART" id="SM00642">
    <property type="entry name" value="Aamy"/>
    <property type="match status" value="1"/>
</dbReference>
<dbReference type="SMART" id="SM00632">
    <property type="entry name" value="Aamy_C"/>
    <property type="match status" value="1"/>
</dbReference>
<dbReference type="SUPFAM" id="SSF51445">
    <property type="entry name" value="(Trans)glycosidases"/>
    <property type="match status" value="1"/>
</dbReference>
<dbReference type="SUPFAM" id="SSF51011">
    <property type="entry name" value="Glycosyl hydrolase domain"/>
    <property type="match status" value="1"/>
</dbReference>
<gene>
    <name type="primary">Amyrel</name>
</gene>
<proteinExistence type="inferred from homology"/>
<accession>O77022</accession>
<sequence>MFKFALALTLCLAGASLSLAQHNPQWWGNRNTIVHLFEWKWSDIAGECETFLAPRGFAGVQVSPVNENIIAAGRPWWERYQPISYKLTTRSGNEEEFADMVRRCNDVGIRIYVDVLLNHMSGDFDGVAVGTAGTEAEPSKKSFPGVPHTAQDFHPSCEITDWNDRFQVQECELVGLKDLNQHSDYVRSKLIEFLDHLIELGVAGFRVDAAKHMAAEDLEYIYGSLSNLNIEHGFPHNARPFIFQEVIDHGHETVSREEYNQLGAVTEFRFSEEIGRAFRGNNALKWLQSWGTDWGFLNSEQALTFVDNHDNQRDHGSVLNYKSPRQYKMATAFHLAYPYGISRVMSSFAFDDHDTPPPQDAQENIISPEFDEDGACVNGWICEHRWRQIYAMVGFKNAVRDTELSGWWDNGDNQISFCRGNKGFLAVNNNLYDLSQELNTCLPAGEYCDVISGSLIDGACTGKSVTVNEYGYGYIHIGSDDFDGVLALHVNAKV</sequence>
<feature type="signal peptide" evidence="1">
    <location>
        <begin position="1"/>
        <end position="20"/>
    </location>
</feature>
<feature type="chain" id="PRO_0000001384" description="Alpha-amylase-related protein">
    <location>
        <begin position="21"/>
        <end position="494"/>
    </location>
</feature>
<feature type="active site" description="Nucleophile" evidence="2">
    <location>
        <position position="208"/>
    </location>
</feature>
<feature type="active site" description="Proton donor" evidence="2">
    <location>
        <position position="245"/>
    </location>
</feature>
<feature type="binding site" evidence="3">
    <location>
        <position position="118"/>
    </location>
    <ligand>
        <name>Ca(2+)</name>
        <dbReference type="ChEBI" id="CHEBI:29108"/>
    </ligand>
</feature>
<feature type="binding site" evidence="3">
    <location>
        <position position="169"/>
    </location>
    <ligand>
        <name>Ca(2+)</name>
        <dbReference type="ChEBI" id="CHEBI:29108"/>
    </ligand>
</feature>
<feature type="binding site" evidence="3">
    <location>
        <position position="178"/>
    </location>
    <ligand>
        <name>Ca(2+)</name>
        <dbReference type="ChEBI" id="CHEBI:29108"/>
    </ligand>
</feature>
<feature type="binding site" evidence="3">
    <location>
        <position position="206"/>
    </location>
    <ligand>
        <name>chloride</name>
        <dbReference type="ChEBI" id="CHEBI:17996"/>
    </ligand>
</feature>
<feature type="binding site" evidence="3">
    <location>
        <position position="212"/>
    </location>
    <ligand>
        <name>Ca(2+)</name>
        <dbReference type="ChEBI" id="CHEBI:29108"/>
    </ligand>
</feature>
<feature type="binding site" evidence="3">
    <location>
        <position position="308"/>
    </location>
    <ligand>
        <name>chloride</name>
        <dbReference type="ChEBI" id="CHEBI:17996"/>
    </ligand>
</feature>
<feature type="binding site" evidence="3">
    <location>
        <position position="343"/>
    </location>
    <ligand>
        <name>chloride</name>
        <dbReference type="ChEBI" id="CHEBI:17996"/>
    </ligand>
</feature>
<feature type="site" description="Transition state stabilizer" evidence="2">
    <location>
        <position position="310"/>
    </location>
</feature>
<feature type="modified residue" description="Pyrrolidone carboxylic acid" evidence="1">
    <location>
        <position position="21"/>
    </location>
</feature>
<feature type="disulfide bond" evidence="3">
    <location>
        <begin position="48"/>
        <end position="104"/>
    </location>
</feature>
<feature type="disulfide bond" evidence="3">
    <location>
        <begin position="157"/>
        <end position="171"/>
    </location>
</feature>
<feature type="disulfide bond" evidence="3">
    <location>
        <begin position="376"/>
        <end position="382"/>
    </location>
</feature>
<feature type="disulfide bond" evidence="4">
    <location>
        <begin position="418"/>
        <end position="441"/>
    </location>
</feature>
<feature type="disulfide bond" evidence="3">
    <location>
        <begin position="448"/>
        <end position="460"/>
    </location>
</feature>